<dbReference type="EMBL" id="JQ867270">
    <property type="protein sequence ID" value="AFX61593.1"/>
    <property type="molecule type" value="mRNA"/>
</dbReference>
<dbReference type="SMR" id="M9P2C1"/>
<dbReference type="GO" id="GO:0005576">
    <property type="term" value="C:extracellular region"/>
    <property type="evidence" value="ECO:0007669"/>
    <property type="project" value="UniProtKB-SubCell"/>
</dbReference>
<dbReference type="GO" id="GO:0006952">
    <property type="term" value="P:defense response"/>
    <property type="evidence" value="ECO:0007669"/>
    <property type="project" value="UniProtKB-KW"/>
</dbReference>
<dbReference type="GO" id="GO:0007218">
    <property type="term" value="P:neuropeptide signaling pathway"/>
    <property type="evidence" value="ECO:0007669"/>
    <property type="project" value="UniProtKB-KW"/>
</dbReference>
<dbReference type="GO" id="GO:0007217">
    <property type="term" value="P:tachykinin receptor signaling pathway"/>
    <property type="evidence" value="ECO:0007669"/>
    <property type="project" value="InterPro"/>
</dbReference>
<dbReference type="InterPro" id="IPR013055">
    <property type="entry name" value="Tachy_Neuro_lke_CS"/>
</dbReference>
<dbReference type="InterPro" id="IPR008216">
    <property type="entry name" value="Tachykinin_fam"/>
</dbReference>
<dbReference type="PANTHER" id="PTHR11250">
    <property type="entry name" value="TACHYKININ"/>
    <property type="match status" value="1"/>
</dbReference>
<dbReference type="PANTHER" id="PTHR11250:SF0">
    <property type="entry name" value="TACHYKININ PRECURSOR 1"/>
    <property type="match status" value="1"/>
</dbReference>
<dbReference type="PRINTS" id="PR01829">
    <property type="entry name" value="PROTACHYKNIN"/>
</dbReference>
<dbReference type="PROSITE" id="PS00267">
    <property type="entry name" value="TACHYKININ"/>
    <property type="match status" value="1"/>
</dbReference>
<protein>
    <recommendedName>
        <fullName evidence="4">Tachykinin-like peptide</fullName>
    </recommendedName>
    <alternativeName>
        <fullName evidence="4">Tachykinin-Thel</fullName>
    </alternativeName>
</protein>
<organism>
    <name type="scientific">Theloderma corticale</name>
    <name type="common">Kwangsi warty tree frog</name>
    <name type="synonym">Theloderma kwangsiense</name>
    <dbReference type="NCBI Taxonomy" id="126966"/>
    <lineage>
        <taxon>Eukaryota</taxon>
        <taxon>Metazoa</taxon>
        <taxon>Chordata</taxon>
        <taxon>Craniata</taxon>
        <taxon>Vertebrata</taxon>
        <taxon>Euteleostomi</taxon>
        <taxon>Amphibia</taxon>
        <taxon>Batrachia</taxon>
        <taxon>Anura</taxon>
        <taxon>Neobatrachia</taxon>
        <taxon>Ranoidea</taxon>
        <taxon>Rhacophoridae</taxon>
        <taxon>Rhacophorinae</taxon>
        <taxon>Theloderma</taxon>
    </lineage>
</organism>
<comment type="function">
    <text evidence="3 5">Tachykinins are active peptides which excite neurons, evoke behavioral responses, are potent vasodilators and secretagogues, and contract (directly or indirectly) many smooth muscles. In vitro, induces contraction of guinea pig ileum smooth muscle in a dose-dependent manner.</text>
</comment>
<comment type="subcellular location">
    <subcellularLocation>
        <location evidence="3">Secreted</location>
    </subcellularLocation>
</comment>
<comment type="tissue specificity">
    <text evidence="6">Expressed by the skin glands.</text>
</comment>
<comment type="mass spectrometry" mass="1309.6" method="Electrospray" evidence="3"/>
<comment type="similarity">
    <text evidence="1">Belongs to the tachykinin family.</text>
</comment>
<sequence length="91" mass="10658">MKILVAFAVIMLVSAQVLAAEIGLNDEPEWYSDQIQEDLPVFENFLQRIARKPSPDRFYGLMGKRNNGFGQMSRKRSAERNTIHNYERRRK</sequence>
<evidence type="ECO:0000255" key="1"/>
<evidence type="ECO:0000256" key="2">
    <source>
        <dbReference type="SAM" id="MobiDB-lite"/>
    </source>
</evidence>
<evidence type="ECO:0000269" key="3">
    <source>
    </source>
</evidence>
<evidence type="ECO:0000303" key="4">
    <source>
    </source>
</evidence>
<evidence type="ECO:0000305" key="5"/>
<evidence type="ECO:0000305" key="6">
    <source>
    </source>
</evidence>
<evidence type="ECO:0000312" key="7">
    <source>
        <dbReference type="EMBL" id="AFX61593.1"/>
    </source>
</evidence>
<proteinExistence type="evidence at protein level"/>
<name>TKN1_THECO</name>
<reference evidence="5" key="1">
    <citation type="journal article" date="2013" name="Zool. Sci.">
        <title>Purification and characterization of a tachykinin-like peptide from skin secretions of the tree frog, Theloderma kwangsiensis.</title>
        <authorList>
            <person name="Zhang H."/>
            <person name="Wei L."/>
            <person name="Zou C."/>
            <person name="Bai J.J."/>
            <person name="Song Y."/>
            <person name="Liu H."/>
        </authorList>
    </citation>
    <scope>NUCLEOTIDE SEQUENCE [MRNA]</scope>
    <scope>PROTEIN SEQUENCE OF 52-62</scope>
    <scope>FUNCTION</scope>
    <scope>SUBCELLULAR LOCATION</scope>
    <scope>AMIDATION AT MET-62</scope>
    <scope>MASS SPECTROMETRY</scope>
    <source>
        <tissue evidence="7">Skin</tissue>
        <tissue evidence="3">Skin secretion</tissue>
    </source>
</reference>
<feature type="signal peptide" evidence="1">
    <location>
        <begin position="1"/>
        <end position="19"/>
    </location>
</feature>
<feature type="propeptide" id="PRO_0000424460" evidence="3">
    <location>
        <begin position="20"/>
        <end position="51"/>
    </location>
</feature>
<feature type="peptide" id="PRO_0000424461" description="Tachykinin-like peptide" evidence="3">
    <location>
        <begin position="52"/>
        <end position="62"/>
    </location>
</feature>
<feature type="propeptide" id="PRO_0000424462" evidence="3">
    <location>
        <begin position="66"/>
        <end position="91"/>
    </location>
</feature>
<feature type="region of interest" description="Disordered" evidence="2">
    <location>
        <begin position="64"/>
        <end position="91"/>
    </location>
</feature>
<feature type="compositionally biased region" description="Basic and acidic residues" evidence="2">
    <location>
        <begin position="76"/>
        <end position="91"/>
    </location>
</feature>
<feature type="modified residue" description="Methionine amide" evidence="3">
    <location>
        <position position="62"/>
    </location>
</feature>
<accession>M9P2C1</accession>
<keyword id="KW-0027">Amidation</keyword>
<keyword id="KW-0878">Amphibian defense peptide</keyword>
<keyword id="KW-0165">Cleavage on pair of basic residues</keyword>
<keyword id="KW-0903">Direct protein sequencing</keyword>
<keyword id="KW-0527">Neuropeptide</keyword>
<keyword id="KW-0964">Secreted</keyword>
<keyword id="KW-0732">Signal</keyword>